<accession>O84048</accession>
<name>SSB_CHLTR</name>
<sequence length="157" mass="17147">MLFGYLVGFLAADPEERMTSGGKRVVVLRLGVKSRVGSKDETVWCRCNIWNNRYDKMLPYLKKGSSVIVAGELSLESYVGRDGSPQASISVSVDTLKFNSGSSRPDARGSDEGRQRANDNVSIGFDGESLDTDSALDKEVYAGFGEDQQYASEDVPF</sequence>
<evidence type="ECO:0000255" key="1">
    <source>
        <dbReference type="HAMAP-Rule" id="MF_00984"/>
    </source>
</evidence>
<evidence type="ECO:0000256" key="2">
    <source>
        <dbReference type="SAM" id="MobiDB-lite"/>
    </source>
</evidence>
<proteinExistence type="inferred from homology"/>
<reference key="1">
    <citation type="journal article" date="1998" name="Science">
        <title>Genome sequence of an obligate intracellular pathogen of humans: Chlamydia trachomatis.</title>
        <authorList>
            <person name="Stephens R.S."/>
            <person name="Kalman S."/>
            <person name="Lammel C.J."/>
            <person name="Fan J."/>
            <person name="Marathe R."/>
            <person name="Aravind L."/>
            <person name="Mitchell W.P."/>
            <person name="Olinger L."/>
            <person name="Tatusov R.L."/>
            <person name="Zhao Q."/>
            <person name="Koonin E.V."/>
            <person name="Davis R.W."/>
        </authorList>
    </citation>
    <scope>NUCLEOTIDE SEQUENCE [LARGE SCALE GENOMIC DNA]</scope>
    <source>
        <strain>ATCC VR-885 / DSM 19411 / UW-3/Cx</strain>
    </source>
</reference>
<comment type="subunit">
    <text evidence="1">Homotetramer.</text>
</comment>
<keyword id="KW-0238">DNA-binding</keyword>
<keyword id="KW-1185">Reference proteome</keyword>
<organism>
    <name type="scientific">Chlamydia trachomatis serovar D (strain ATCC VR-885 / DSM 19411 / UW-3/Cx)</name>
    <dbReference type="NCBI Taxonomy" id="272561"/>
    <lineage>
        <taxon>Bacteria</taxon>
        <taxon>Pseudomonadati</taxon>
        <taxon>Chlamydiota</taxon>
        <taxon>Chlamydiia</taxon>
        <taxon>Chlamydiales</taxon>
        <taxon>Chlamydiaceae</taxon>
        <taxon>Chlamydia/Chlamydophila group</taxon>
        <taxon>Chlamydia</taxon>
    </lineage>
</organism>
<protein>
    <recommendedName>
        <fullName evidence="1">Single-stranded DNA-binding protein</fullName>
        <shortName evidence="1">SSB</shortName>
    </recommendedName>
</protein>
<gene>
    <name type="primary">ssb</name>
    <name type="ordered locus">CT_044</name>
</gene>
<feature type="chain" id="PRO_0000096027" description="Single-stranded DNA-binding protein">
    <location>
        <begin position="1"/>
        <end position="157"/>
    </location>
</feature>
<feature type="domain" description="SSB" evidence="1">
    <location>
        <begin position="1"/>
        <end position="100"/>
    </location>
</feature>
<feature type="region of interest" description="Disordered" evidence="2">
    <location>
        <begin position="99"/>
        <end position="131"/>
    </location>
</feature>
<feature type="compositionally biased region" description="Basic and acidic residues" evidence="2">
    <location>
        <begin position="105"/>
        <end position="117"/>
    </location>
</feature>
<dbReference type="EMBL" id="AE001273">
    <property type="protein sequence ID" value="AAC67635.1"/>
    <property type="molecule type" value="Genomic_DNA"/>
</dbReference>
<dbReference type="PIR" id="B71563">
    <property type="entry name" value="B71563"/>
</dbReference>
<dbReference type="RefSeq" id="NP_219547.1">
    <property type="nucleotide sequence ID" value="NC_000117.1"/>
</dbReference>
<dbReference type="RefSeq" id="WP_009872341.1">
    <property type="nucleotide sequence ID" value="NC_000117.1"/>
</dbReference>
<dbReference type="SMR" id="O84048"/>
<dbReference type="STRING" id="272561.CT_044"/>
<dbReference type="EnsemblBacteria" id="AAC67635">
    <property type="protein sequence ID" value="AAC67635"/>
    <property type="gene ID" value="CT_044"/>
</dbReference>
<dbReference type="GeneID" id="884036"/>
<dbReference type="KEGG" id="ctr:CT_044"/>
<dbReference type="PATRIC" id="fig|272561.5.peg.50"/>
<dbReference type="HOGENOM" id="CLU_1666266_0_0_0"/>
<dbReference type="InParanoid" id="O84048"/>
<dbReference type="OrthoDB" id="9809878at2"/>
<dbReference type="Proteomes" id="UP000000431">
    <property type="component" value="Chromosome"/>
</dbReference>
<dbReference type="GO" id="GO:0009295">
    <property type="term" value="C:nucleoid"/>
    <property type="evidence" value="ECO:0000318"/>
    <property type="project" value="GO_Central"/>
</dbReference>
<dbReference type="GO" id="GO:0008047">
    <property type="term" value="F:enzyme activator activity"/>
    <property type="evidence" value="ECO:0000318"/>
    <property type="project" value="GO_Central"/>
</dbReference>
<dbReference type="GO" id="GO:0003697">
    <property type="term" value="F:single-stranded DNA binding"/>
    <property type="evidence" value="ECO:0000318"/>
    <property type="project" value="GO_Central"/>
</dbReference>
<dbReference type="GO" id="GO:0006260">
    <property type="term" value="P:DNA replication"/>
    <property type="evidence" value="ECO:0000318"/>
    <property type="project" value="GO_Central"/>
</dbReference>
<dbReference type="CDD" id="cd04496">
    <property type="entry name" value="SSB_OBF"/>
    <property type="match status" value="1"/>
</dbReference>
<dbReference type="FunFam" id="2.40.50.140:FF:000512">
    <property type="entry name" value="Single-stranded DNA-binding protein"/>
    <property type="match status" value="1"/>
</dbReference>
<dbReference type="Gene3D" id="2.40.50.140">
    <property type="entry name" value="Nucleic acid-binding proteins"/>
    <property type="match status" value="1"/>
</dbReference>
<dbReference type="HAMAP" id="MF_00984">
    <property type="entry name" value="SSB"/>
    <property type="match status" value="1"/>
</dbReference>
<dbReference type="InterPro" id="IPR012340">
    <property type="entry name" value="NA-bd_OB-fold"/>
</dbReference>
<dbReference type="InterPro" id="IPR000424">
    <property type="entry name" value="Primosome_PriB/ssb"/>
</dbReference>
<dbReference type="InterPro" id="IPR011344">
    <property type="entry name" value="ssDNA-bd"/>
</dbReference>
<dbReference type="NCBIfam" id="NF004948">
    <property type="entry name" value="PRK06293.1"/>
    <property type="match status" value="1"/>
</dbReference>
<dbReference type="NCBIfam" id="TIGR00621">
    <property type="entry name" value="ssb"/>
    <property type="match status" value="1"/>
</dbReference>
<dbReference type="PANTHER" id="PTHR10302">
    <property type="entry name" value="SINGLE-STRANDED DNA-BINDING PROTEIN"/>
    <property type="match status" value="1"/>
</dbReference>
<dbReference type="PANTHER" id="PTHR10302:SF27">
    <property type="entry name" value="SINGLE-STRANDED DNA-BINDING PROTEIN"/>
    <property type="match status" value="1"/>
</dbReference>
<dbReference type="Pfam" id="PF00436">
    <property type="entry name" value="SSB"/>
    <property type="match status" value="1"/>
</dbReference>
<dbReference type="SUPFAM" id="SSF50249">
    <property type="entry name" value="Nucleic acid-binding proteins"/>
    <property type="match status" value="1"/>
</dbReference>
<dbReference type="PROSITE" id="PS50935">
    <property type="entry name" value="SSB"/>
    <property type="match status" value="1"/>
</dbReference>